<protein>
    <recommendedName>
        <fullName evidence="1">Integration host factor subunit beta</fullName>
        <shortName evidence="1">IHF-beta</shortName>
    </recommendedName>
</protein>
<feature type="chain" id="PRO_1000122243" description="Integration host factor subunit beta">
    <location>
        <begin position="1"/>
        <end position="95"/>
    </location>
</feature>
<feature type="region of interest" description="Disordered" evidence="2">
    <location>
        <begin position="56"/>
        <end position="76"/>
    </location>
</feature>
<name>IHFB_SHEWM</name>
<dbReference type="EMBL" id="CP000961">
    <property type="protein sequence ID" value="ACA86591.1"/>
    <property type="molecule type" value="Genomic_DNA"/>
</dbReference>
<dbReference type="RefSeq" id="WP_012324933.1">
    <property type="nucleotide sequence ID" value="NC_010506.1"/>
</dbReference>
<dbReference type="SMR" id="B1KF50"/>
<dbReference type="STRING" id="392500.Swoo_2312"/>
<dbReference type="KEGG" id="swd:Swoo_2312"/>
<dbReference type="eggNOG" id="COG0776">
    <property type="taxonomic scope" value="Bacteria"/>
</dbReference>
<dbReference type="HOGENOM" id="CLU_105066_2_0_6"/>
<dbReference type="Proteomes" id="UP000002168">
    <property type="component" value="Chromosome"/>
</dbReference>
<dbReference type="GO" id="GO:0005694">
    <property type="term" value="C:chromosome"/>
    <property type="evidence" value="ECO:0007669"/>
    <property type="project" value="InterPro"/>
</dbReference>
<dbReference type="GO" id="GO:0005829">
    <property type="term" value="C:cytosol"/>
    <property type="evidence" value="ECO:0007669"/>
    <property type="project" value="TreeGrafter"/>
</dbReference>
<dbReference type="GO" id="GO:0003677">
    <property type="term" value="F:DNA binding"/>
    <property type="evidence" value="ECO:0007669"/>
    <property type="project" value="UniProtKB-UniRule"/>
</dbReference>
<dbReference type="GO" id="GO:0030527">
    <property type="term" value="F:structural constituent of chromatin"/>
    <property type="evidence" value="ECO:0007669"/>
    <property type="project" value="InterPro"/>
</dbReference>
<dbReference type="GO" id="GO:0006310">
    <property type="term" value="P:DNA recombination"/>
    <property type="evidence" value="ECO:0007669"/>
    <property type="project" value="UniProtKB-UniRule"/>
</dbReference>
<dbReference type="GO" id="GO:0006355">
    <property type="term" value="P:regulation of DNA-templated transcription"/>
    <property type="evidence" value="ECO:0007669"/>
    <property type="project" value="UniProtKB-UniRule"/>
</dbReference>
<dbReference type="GO" id="GO:0006417">
    <property type="term" value="P:regulation of translation"/>
    <property type="evidence" value="ECO:0007669"/>
    <property type="project" value="UniProtKB-UniRule"/>
</dbReference>
<dbReference type="CDD" id="cd13836">
    <property type="entry name" value="IHF_B"/>
    <property type="match status" value="1"/>
</dbReference>
<dbReference type="FunFam" id="4.10.520.10:FF:000003">
    <property type="entry name" value="Integration host factor subunit beta"/>
    <property type="match status" value="1"/>
</dbReference>
<dbReference type="Gene3D" id="4.10.520.10">
    <property type="entry name" value="IHF-like DNA-binding proteins"/>
    <property type="match status" value="1"/>
</dbReference>
<dbReference type="HAMAP" id="MF_00381">
    <property type="entry name" value="IHF_beta"/>
    <property type="match status" value="1"/>
</dbReference>
<dbReference type="InterPro" id="IPR000119">
    <property type="entry name" value="Hist_DNA-bd"/>
</dbReference>
<dbReference type="InterPro" id="IPR020816">
    <property type="entry name" value="Histone-like_DNA-bd_CS"/>
</dbReference>
<dbReference type="InterPro" id="IPR010992">
    <property type="entry name" value="IHF-like_DNA-bd_dom_sf"/>
</dbReference>
<dbReference type="InterPro" id="IPR005685">
    <property type="entry name" value="IHF_beta"/>
</dbReference>
<dbReference type="NCBIfam" id="TIGR00988">
    <property type="entry name" value="hip"/>
    <property type="match status" value="1"/>
</dbReference>
<dbReference type="NCBIfam" id="NF001222">
    <property type="entry name" value="PRK00199.1"/>
    <property type="match status" value="1"/>
</dbReference>
<dbReference type="PANTHER" id="PTHR33175">
    <property type="entry name" value="DNA-BINDING PROTEIN HU"/>
    <property type="match status" value="1"/>
</dbReference>
<dbReference type="PANTHER" id="PTHR33175:SF5">
    <property type="entry name" value="INTEGRATION HOST FACTOR SUBUNIT BETA"/>
    <property type="match status" value="1"/>
</dbReference>
<dbReference type="Pfam" id="PF00216">
    <property type="entry name" value="Bac_DNA_binding"/>
    <property type="match status" value="1"/>
</dbReference>
<dbReference type="PRINTS" id="PR01727">
    <property type="entry name" value="DNABINDINGHU"/>
</dbReference>
<dbReference type="SMART" id="SM00411">
    <property type="entry name" value="BHL"/>
    <property type="match status" value="1"/>
</dbReference>
<dbReference type="SUPFAM" id="SSF47729">
    <property type="entry name" value="IHF-like DNA-binding proteins"/>
    <property type="match status" value="1"/>
</dbReference>
<dbReference type="PROSITE" id="PS00045">
    <property type="entry name" value="HISTONE_LIKE"/>
    <property type="match status" value="1"/>
</dbReference>
<gene>
    <name evidence="1" type="primary">ihfB</name>
    <name evidence="1" type="synonym">himD</name>
    <name type="ordered locus">Swoo_2312</name>
</gene>
<accession>B1KF50</accession>
<sequence length="95" mass="10703">MTKSELIEKLAMRQSQLSAKEVESAIKEMLEQMAQTLEGGDRIEIRGFGSFSLHFRAPRTGRNPKTGTSVELDGKYVPHFKPGKELRERVDAINV</sequence>
<proteinExistence type="inferred from homology"/>
<organism>
    <name type="scientific">Shewanella woodyi (strain ATCC 51908 / MS32)</name>
    <dbReference type="NCBI Taxonomy" id="392500"/>
    <lineage>
        <taxon>Bacteria</taxon>
        <taxon>Pseudomonadati</taxon>
        <taxon>Pseudomonadota</taxon>
        <taxon>Gammaproteobacteria</taxon>
        <taxon>Alteromonadales</taxon>
        <taxon>Shewanellaceae</taxon>
        <taxon>Shewanella</taxon>
    </lineage>
</organism>
<reference key="1">
    <citation type="submission" date="2008-02" db="EMBL/GenBank/DDBJ databases">
        <title>Complete sequence of Shewanella woodyi ATCC 51908.</title>
        <authorList>
            <consortium name="US DOE Joint Genome Institute"/>
            <person name="Copeland A."/>
            <person name="Lucas S."/>
            <person name="Lapidus A."/>
            <person name="Glavina del Rio T."/>
            <person name="Dalin E."/>
            <person name="Tice H."/>
            <person name="Bruce D."/>
            <person name="Goodwin L."/>
            <person name="Pitluck S."/>
            <person name="Sims D."/>
            <person name="Brettin T."/>
            <person name="Detter J.C."/>
            <person name="Han C."/>
            <person name="Kuske C.R."/>
            <person name="Schmutz J."/>
            <person name="Larimer F."/>
            <person name="Land M."/>
            <person name="Hauser L."/>
            <person name="Kyrpides N."/>
            <person name="Lykidis A."/>
            <person name="Zhao J.-S."/>
            <person name="Richardson P."/>
        </authorList>
    </citation>
    <scope>NUCLEOTIDE SEQUENCE [LARGE SCALE GENOMIC DNA]</scope>
    <source>
        <strain>ATCC 51908 / MS32</strain>
    </source>
</reference>
<evidence type="ECO:0000255" key="1">
    <source>
        <dbReference type="HAMAP-Rule" id="MF_00381"/>
    </source>
</evidence>
<evidence type="ECO:0000256" key="2">
    <source>
        <dbReference type="SAM" id="MobiDB-lite"/>
    </source>
</evidence>
<comment type="function">
    <text evidence="1">This protein is one of the two subunits of integration host factor, a specific DNA-binding protein that functions in genetic recombination as well as in transcriptional and translational control.</text>
</comment>
<comment type="subunit">
    <text evidence="1">Heterodimer of an alpha and a beta chain.</text>
</comment>
<comment type="similarity">
    <text evidence="1">Belongs to the bacterial histone-like protein family.</text>
</comment>
<keyword id="KW-0233">DNA recombination</keyword>
<keyword id="KW-0238">DNA-binding</keyword>
<keyword id="KW-1185">Reference proteome</keyword>
<keyword id="KW-0804">Transcription</keyword>
<keyword id="KW-0805">Transcription regulation</keyword>
<keyword id="KW-0810">Translation regulation</keyword>